<feature type="chain" id="PRO_0000290798" description="Small ribosomal subunit protein uS8">
    <location>
        <begin position="1"/>
        <end position="133"/>
    </location>
</feature>
<reference key="1">
    <citation type="journal article" date="2006" name="PLoS Genet.">
        <title>Comparative genomics of emerging human ehrlichiosis agents.</title>
        <authorList>
            <person name="Dunning Hotopp J.C."/>
            <person name="Lin M."/>
            <person name="Madupu R."/>
            <person name="Crabtree J."/>
            <person name="Angiuoli S.V."/>
            <person name="Eisen J.A."/>
            <person name="Seshadri R."/>
            <person name="Ren Q."/>
            <person name="Wu M."/>
            <person name="Utterback T.R."/>
            <person name="Smith S."/>
            <person name="Lewis M."/>
            <person name="Khouri H."/>
            <person name="Zhang C."/>
            <person name="Niu H."/>
            <person name="Lin Q."/>
            <person name="Ohashi N."/>
            <person name="Zhi N."/>
            <person name="Nelson W.C."/>
            <person name="Brinkac L.M."/>
            <person name="Dodson R.J."/>
            <person name="Rosovitz M.J."/>
            <person name="Sundaram J.P."/>
            <person name="Daugherty S.C."/>
            <person name="Davidsen T."/>
            <person name="Durkin A.S."/>
            <person name="Gwinn M.L."/>
            <person name="Haft D.H."/>
            <person name="Selengut J.D."/>
            <person name="Sullivan S.A."/>
            <person name="Zafar N."/>
            <person name="Zhou L."/>
            <person name="Benahmed F."/>
            <person name="Forberger H."/>
            <person name="Halpin R."/>
            <person name="Mulligan S."/>
            <person name="Robinson J."/>
            <person name="White O."/>
            <person name="Rikihisa Y."/>
            <person name="Tettelin H."/>
        </authorList>
    </citation>
    <scope>NUCLEOTIDE SEQUENCE [LARGE SCALE GENOMIC DNA]</scope>
    <source>
        <strain>HZ</strain>
    </source>
</reference>
<name>RS8_ANAPZ</name>
<accession>Q2GL45</accession>
<protein>
    <recommendedName>
        <fullName evidence="1">Small ribosomal subunit protein uS8</fullName>
    </recommendedName>
    <alternativeName>
        <fullName evidence="2">30S ribosomal protein S8</fullName>
    </alternativeName>
</protein>
<organism>
    <name type="scientific">Anaplasma phagocytophilum (strain HZ)</name>
    <dbReference type="NCBI Taxonomy" id="212042"/>
    <lineage>
        <taxon>Bacteria</taxon>
        <taxon>Pseudomonadati</taxon>
        <taxon>Pseudomonadota</taxon>
        <taxon>Alphaproteobacteria</taxon>
        <taxon>Rickettsiales</taxon>
        <taxon>Anaplasmataceae</taxon>
        <taxon>Anaplasma</taxon>
        <taxon>phagocytophilum group</taxon>
    </lineage>
</organism>
<keyword id="KW-0687">Ribonucleoprotein</keyword>
<keyword id="KW-0689">Ribosomal protein</keyword>
<keyword id="KW-0694">RNA-binding</keyword>
<keyword id="KW-0699">rRNA-binding</keyword>
<comment type="function">
    <text evidence="1">One of the primary rRNA binding proteins, it binds directly to 16S rRNA central domain where it helps coordinate assembly of the platform of the 30S subunit.</text>
</comment>
<comment type="subunit">
    <text evidence="1">Part of the 30S ribosomal subunit. Contacts proteins S5 and S12.</text>
</comment>
<comment type="similarity">
    <text evidence="1">Belongs to the universal ribosomal protein uS8 family.</text>
</comment>
<gene>
    <name evidence="1" type="primary">rpsH</name>
    <name type="ordered locus">APH_0294</name>
</gene>
<sequence>MSLSDPIADFLTRLRNGQAGMNKVVYVPCSKVVMAVLRILVEEGYIESFTEEVRGDSGIKVLKVFLKYFNSAAAIRKIVRVSRPGKRVYSSADKMPRFYNALGIYIVSTSKGIMLDSHARNAGVGGEILCGVF</sequence>
<proteinExistence type="inferred from homology"/>
<dbReference type="EMBL" id="CP000235">
    <property type="protein sequence ID" value="ABD43472.1"/>
    <property type="molecule type" value="Genomic_DNA"/>
</dbReference>
<dbReference type="RefSeq" id="WP_011450429.1">
    <property type="nucleotide sequence ID" value="NC_007797.1"/>
</dbReference>
<dbReference type="SMR" id="Q2GL45"/>
<dbReference type="STRING" id="212042.APH_0294"/>
<dbReference type="PaxDb" id="212042-APH_0294"/>
<dbReference type="EnsemblBacteria" id="ABD43472">
    <property type="protein sequence ID" value="ABD43472"/>
    <property type="gene ID" value="APH_0294"/>
</dbReference>
<dbReference type="GeneID" id="92747509"/>
<dbReference type="KEGG" id="aph:APH_0294"/>
<dbReference type="eggNOG" id="COG0096">
    <property type="taxonomic scope" value="Bacteria"/>
</dbReference>
<dbReference type="HOGENOM" id="CLU_098428_0_2_5"/>
<dbReference type="Proteomes" id="UP000001943">
    <property type="component" value="Chromosome"/>
</dbReference>
<dbReference type="GO" id="GO:1990904">
    <property type="term" value="C:ribonucleoprotein complex"/>
    <property type="evidence" value="ECO:0007669"/>
    <property type="project" value="UniProtKB-KW"/>
</dbReference>
<dbReference type="GO" id="GO:0005840">
    <property type="term" value="C:ribosome"/>
    <property type="evidence" value="ECO:0007669"/>
    <property type="project" value="UniProtKB-KW"/>
</dbReference>
<dbReference type="GO" id="GO:0019843">
    <property type="term" value="F:rRNA binding"/>
    <property type="evidence" value="ECO:0007669"/>
    <property type="project" value="UniProtKB-UniRule"/>
</dbReference>
<dbReference type="GO" id="GO:0003735">
    <property type="term" value="F:structural constituent of ribosome"/>
    <property type="evidence" value="ECO:0007669"/>
    <property type="project" value="InterPro"/>
</dbReference>
<dbReference type="GO" id="GO:0006412">
    <property type="term" value="P:translation"/>
    <property type="evidence" value="ECO:0007669"/>
    <property type="project" value="UniProtKB-UniRule"/>
</dbReference>
<dbReference type="FunFam" id="3.30.1490.10:FF:000001">
    <property type="entry name" value="30S ribosomal protein S8"/>
    <property type="match status" value="1"/>
</dbReference>
<dbReference type="Gene3D" id="3.30.1370.30">
    <property type="match status" value="1"/>
</dbReference>
<dbReference type="Gene3D" id="3.30.1490.10">
    <property type="match status" value="1"/>
</dbReference>
<dbReference type="HAMAP" id="MF_01302_B">
    <property type="entry name" value="Ribosomal_uS8_B"/>
    <property type="match status" value="1"/>
</dbReference>
<dbReference type="InterPro" id="IPR000630">
    <property type="entry name" value="Ribosomal_uS8"/>
</dbReference>
<dbReference type="InterPro" id="IPR047863">
    <property type="entry name" value="Ribosomal_uS8_CS"/>
</dbReference>
<dbReference type="InterPro" id="IPR035987">
    <property type="entry name" value="Ribosomal_uS8_sf"/>
</dbReference>
<dbReference type="NCBIfam" id="NF001109">
    <property type="entry name" value="PRK00136.1"/>
    <property type="match status" value="1"/>
</dbReference>
<dbReference type="PANTHER" id="PTHR11758">
    <property type="entry name" value="40S RIBOSOMAL PROTEIN S15A"/>
    <property type="match status" value="1"/>
</dbReference>
<dbReference type="Pfam" id="PF00410">
    <property type="entry name" value="Ribosomal_S8"/>
    <property type="match status" value="1"/>
</dbReference>
<dbReference type="SUPFAM" id="SSF56047">
    <property type="entry name" value="Ribosomal protein S8"/>
    <property type="match status" value="1"/>
</dbReference>
<dbReference type="PROSITE" id="PS00053">
    <property type="entry name" value="RIBOSOMAL_S8"/>
    <property type="match status" value="1"/>
</dbReference>
<evidence type="ECO:0000255" key="1">
    <source>
        <dbReference type="HAMAP-Rule" id="MF_01302"/>
    </source>
</evidence>
<evidence type="ECO:0000305" key="2"/>